<reference key="1">
    <citation type="journal article" date="1992" name="J. Bacteriol.">
        <title>A novel lactococcal bacteriocin whose activity depends on the complementary action of two peptides.</title>
        <authorList>
            <person name="Nissen-Meyer J."/>
            <person name="Holo H."/>
            <person name="Havarstein L.S."/>
            <person name="Sletten K."/>
            <person name="Nes I.F."/>
        </authorList>
    </citation>
    <scope>PROTEIN SEQUENCE</scope>
    <source>
        <strain>LMG 2081</strain>
    </source>
</reference>
<proteinExistence type="evidence at protein level"/>
<accession>P36962</accession>
<keyword id="KW-0002">3D-structure</keyword>
<keyword id="KW-0044">Antibiotic</keyword>
<keyword id="KW-0929">Antimicrobial</keyword>
<keyword id="KW-0078">Bacteriocin</keyword>
<keyword id="KW-0903">Direct protein sequencing</keyword>
<feature type="peptide" id="PRO_0000044641" description="Bacteriocin lactococcin-G subunit beta">
    <location>
        <begin position="1"/>
        <end position="35"/>
    </location>
</feature>
<feature type="helix" evidence="1">
    <location>
        <begin position="5"/>
        <end position="19"/>
    </location>
</feature>
<feature type="turn" evidence="1">
    <location>
        <begin position="20"/>
        <end position="22"/>
    </location>
</feature>
<feature type="turn" evidence="1">
    <location>
        <begin position="24"/>
        <end position="26"/>
    </location>
</feature>
<feature type="helix" evidence="1">
    <location>
        <begin position="32"/>
        <end position="34"/>
    </location>
</feature>
<organism>
    <name type="scientific">Lactococcus lactis subsp. lactis</name>
    <name type="common">Streptococcus lactis</name>
    <dbReference type="NCBI Taxonomy" id="1360"/>
    <lineage>
        <taxon>Bacteria</taxon>
        <taxon>Bacillati</taxon>
        <taxon>Bacillota</taxon>
        <taxon>Bacilli</taxon>
        <taxon>Lactobacillales</taxon>
        <taxon>Streptococcaceae</taxon>
        <taxon>Lactococcus</taxon>
    </lineage>
</organism>
<evidence type="ECO:0007829" key="1">
    <source>
        <dbReference type="PDB" id="2JPK"/>
    </source>
</evidence>
<comment type="function">
    <text>Kills Lactococci.</text>
</comment>
<comment type="subunit">
    <text>Bacteriocin activity requires interaction of alpha and beta peptides in a molar ratio of 7:1 or 8:1 respectively.</text>
</comment>
<sequence length="35" mass="4110">KKWGWLAWVDPAYEFIKGFGKGAIKEGNKDKWKNI</sequence>
<name>LCGB_LACLL</name>
<dbReference type="PIR" id="C44918">
    <property type="entry name" value="C44918"/>
</dbReference>
<dbReference type="PDB" id="2JPK">
    <property type="method" value="NMR"/>
    <property type="chains" value="A=1-35"/>
</dbReference>
<dbReference type="PDB" id="2JPM">
    <property type="method" value="NMR"/>
    <property type="chains" value="A=1-35"/>
</dbReference>
<dbReference type="PDBsum" id="2JPK"/>
<dbReference type="PDBsum" id="2JPM"/>
<dbReference type="BMRB" id="P36962"/>
<dbReference type="SMR" id="P36962"/>
<dbReference type="TCDB" id="1.C.25.1.1">
    <property type="family name" value="the lactococcin g (lactococcin g) family"/>
</dbReference>
<dbReference type="EvolutionaryTrace" id="P36962"/>
<dbReference type="GO" id="GO:0042742">
    <property type="term" value="P:defense response to bacterium"/>
    <property type="evidence" value="ECO:0007669"/>
    <property type="project" value="UniProtKB-KW"/>
</dbReference>
<dbReference type="GO" id="GO:0031640">
    <property type="term" value="P:killing of cells of another organism"/>
    <property type="evidence" value="ECO:0007669"/>
    <property type="project" value="UniProtKB-KW"/>
</dbReference>
<dbReference type="InterPro" id="IPR021089">
    <property type="entry name" value="Bacteriocin_lactococcin-G"/>
</dbReference>
<dbReference type="NCBIfam" id="NF038034">
    <property type="entry name" value="lactGbeta_entB"/>
    <property type="match status" value="1"/>
</dbReference>
<dbReference type="Pfam" id="PF11632">
    <property type="entry name" value="LcnG-beta"/>
    <property type="match status" value="1"/>
</dbReference>
<protein>
    <recommendedName>
        <fullName>Bacteriocin lactococcin-G subunit beta</fullName>
    </recommendedName>
</protein>